<reference key="1">
    <citation type="journal article" date="2006" name="Toxicon">
        <title>A novel conotoxin from Conus striatus, mu-SIIIA, selectively blocking rat tetrodotoxin-resistant sodium channels.</title>
        <authorList>
            <person name="Wang C.-Z."/>
            <person name="Zhang H."/>
            <person name="Jiang H."/>
            <person name="Lu W.-Y."/>
            <person name="Zhao Z.-Q."/>
            <person name="Chi C.-W."/>
        </authorList>
    </citation>
    <scope>NUCLEOTIDE SEQUENCE [MRNA]</scope>
    <scope>SYNTHESIS OF 52-71</scope>
    <scope>FUNCTION</scope>
    <source>
        <tissue>Venom duct</tissue>
    </source>
</reference>
<reference key="2">
    <citation type="journal article" date="2005" name="Biochemistry">
        <title>Novel conotoxins from Conus striatus and Conus kinoshitai selectively block TTX-resistant sodium channels.</title>
        <authorList>
            <person name="Bulaj G."/>
            <person name="West P.J."/>
            <person name="Garrett J.E."/>
            <person name="Watkins M."/>
            <person name="Zhang M.-M."/>
            <person name="Norton R.S."/>
            <person name="Smith B.J."/>
            <person name="Yoshikami D."/>
            <person name="Olivera B.M."/>
        </authorList>
    </citation>
    <scope>NUCLEOTIDE SEQUENCE [MRNA] OF 52-73</scope>
    <scope>SYNTHESIS OF 52-71</scope>
    <scope>FUNCTION</scope>
    <source>
        <tissue>Venom duct</tissue>
    </source>
</reference>
<reference key="3">
    <citation type="journal article" date="2006" name="Biochemistry">
        <authorList>
            <person name="Bulaj G."/>
            <person name="West P.J."/>
            <person name="Garrett J.E."/>
            <person name="Watkins M."/>
            <person name="Zhang M.-M."/>
            <person name="Norton R.S."/>
            <person name="Smith B.J."/>
            <person name="Yoshikami D."/>
            <person name="Olivera B.M."/>
        </authorList>
    </citation>
    <scope>ERRATUM OF PUBMED:15882064</scope>
</reference>
<reference key="4">
    <citation type="journal article" date="2008" name="J. Biol. Chem.">
        <title>Neuronally mu-conotoxins from Conus striatus utilize an alpha-helical motif to target mammalian sodium channels.</title>
        <authorList>
            <person name="Schroeder C.I."/>
            <person name="Ekberg J."/>
            <person name="Nielsen K.J."/>
            <person name="Adams D."/>
            <person name="Loughnan M.L."/>
            <person name="Thomas L."/>
            <person name="Adams D.J."/>
            <person name="Alewood P.F."/>
            <person name="Lewis R.J."/>
        </authorList>
    </citation>
    <scope>PROTEIN SEQUENCE OF 52-71</scope>
    <scope>SYNTHESIS OF 52-71</scope>
    <scope>FUNCTION</scope>
    <scope>SUBCELLULAR LOCATION</scope>
    <scope>TISSUE SPECIFICITY</scope>
    <scope>MASS SPECTROMETRY</scope>
    <scope>PYROGLUTAMATE FORMATION AT GLN-52</scope>
    <scope>AMIDATION AT CYS-71</scope>
    <scope>STRUCTURE BY NMR OF 52-71</scope>
    <scope>MUTAGENESIS OF GLN-52; LYS-62; TRP-63; ARG-65; ASP-66; HIS-67 AND ARG-69</scope>
    <source>
        <tissue>Venom</tissue>
    </source>
</reference>
<reference key="5">
    <citation type="journal article" date="2011" name="Proc. Natl. Acad. Sci. U.S.A.">
        <title>mu-Conotoxins that differentially block sodium channels Nav1.1 through 1.8 identify those responsible for action potentials in sciatic nerve.</title>
        <authorList>
            <person name="Wilson M.J."/>
            <person name="Yoshikami D."/>
            <person name="Azam L."/>
            <person name="Gajewiak J."/>
            <person name="Olivera B.M."/>
            <person name="Bulaj G."/>
            <person name="Zhang M.M."/>
        </authorList>
    </citation>
    <scope>FUNCTION ON SODIUM CHANNELS</scope>
</reference>
<reference key="6">
    <citation type="journal article" date="2012" name="Biopolymers">
        <title>N- and C-terminal extensions of mu-conotoxins increase potency and selectivity for neuronal sodium channels.</title>
        <authorList>
            <person name="Schroeder C.I."/>
            <person name="Adams D."/>
            <person name="Thomas L."/>
            <person name="Alewood P.F."/>
            <person name="Lewis R.J."/>
        </authorList>
    </citation>
    <scope>MUTAGENESIS OF GLN-52; ASP-66 AND CYS-71</scope>
    <scope>SYNTHESIS OF 52-71</scope>
</reference>
<reference key="7">
    <citation type="journal article" date="2012" name="Br. J. Pharmacol.">
        <title>A novel u-conopeptide, CnIIIC, exerts potent and preferential inhibition of NaV1.2/1.4 channels and blocks neuronal nicotinic acetylcholine receptors.</title>
        <authorList>
            <person name="Favreau P."/>
            <person name="Benoit E."/>
            <person name="Hocking H.G."/>
            <person name="Carlier L."/>
            <person name="D'Hoedt D."/>
            <person name="Leipold E."/>
            <person name="Markgraf R."/>
            <person name="Schlumberger S."/>
            <person name="Cordova M.A."/>
            <person name="Gaertner H."/>
            <person name="Paolini-Bertrand M."/>
            <person name="Hartley O."/>
            <person name="Tytgat J."/>
            <person name="Heinemann S.H."/>
            <person name="Bertrand D."/>
            <person name="Boelens R."/>
            <person name="Stocklin R."/>
            <person name="Molgo J."/>
        </authorList>
    </citation>
    <scope>FUNCTION</scope>
    <scope>SYNTHESIS OF 52-71</scope>
</reference>
<reference key="8">
    <citation type="journal article" date="2008" name="Biochemistry">
        <title>Structure, dynamics, and selectivity of the sodium channel blocker mu-conotoxin SIIIA.</title>
        <authorList>
            <person name="Yao S."/>
            <person name="Zhang M.M."/>
            <person name="Yoshikami D."/>
            <person name="Azam L."/>
            <person name="Olivera B.M."/>
            <person name="Bulaj G."/>
            <person name="Norton R.S."/>
        </authorList>
    </citation>
    <scope>STRUCTURE BY NMR OF 52-71</scope>
    <scope>SYNTHESIS OF 52-71</scope>
    <scope>DISULFIDE BONDS</scope>
    <scope>FUNCTION</scope>
</reference>
<protein>
    <recommendedName>
        <fullName evidence="11 12">Mu-conotoxin SIIIA</fullName>
    </recommendedName>
</protein>
<evidence type="ECO:0000250" key="1"/>
<evidence type="ECO:0000255" key="2"/>
<evidence type="ECO:0000256" key="3">
    <source>
        <dbReference type="SAM" id="MobiDB-lite"/>
    </source>
</evidence>
<evidence type="ECO:0000269" key="4">
    <source>
    </source>
</evidence>
<evidence type="ECO:0000269" key="5">
    <source>
    </source>
</evidence>
<evidence type="ECO:0000269" key="6">
    <source>
    </source>
</evidence>
<evidence type="ECO:0000269" key="7">
    <source>
    </source>
</evidence>
<evidence type="ECO:0000269" key="8">
    <source>
    </source>
</evidence>
<evidence type="ECO:0000269" key="9">
    <source>
    </source>
</evidence>
<evidence type="ECO:0000269" key="10">
    <source>
    </source>
</evidence>
<evidence type="ECO:0000303" key="11">
    <source>
    </source>
</evidence>
<evidence type="ECO:0000303" key="12">
    <source>
    </source>
</evidence>
<evidence type="ECO:0000305" key="13"/>
<keyword id="KW-0027">Amidation</keyword>
<keyword id="KW-0165">Cleavage on pair of basic residues</keyword>
<keyword id="KW-0903">Direct protein sequencing</keyword>
<keyword id="KW-1015">Disulfide bond</keyword>
<keyword id="KW-0872">Ion channel impairing toxin</keyword>
<keyword id="KW-0528">Neurotoxin</keyword>
<keyword id="KW-0873">Pyrrolidone carboxylic acid</keyword>
<keyword id="KW-0964">Secreted</keyword>
<keyword id="KW-0732">Signal</keyword>
<keyword id="KW-0800">Toxin</keyword>
<keyword id="KW-0738">Voltage-gated sodium channel impairing toxin</keyword>
<feature type="signal peptide" evidence="2">
    <location>
        <begin position="1"/>
        <end position="20"/>
    </location>
</feature>
<feature type="propeptide" id="PRO_0000035057" evidence="1">
    <location>
        <begin position="21"/>
        <end position="49"/>
    </location>
</feature>
<feature type="peptide" id="PRO_0000035058" description="Mu-conotoxin SIIIA">
    <location>
        <begin position="52"/>
        <end position="71"/>
    </location>
</feature>
<feature type="region of interest" description="Disordered" evidence="3">
    <location>
        <begin position="20"/>
        <end position="40"/>
    </location>
</feature>
<feature type="compositionally biased region" description="Basic and acidic residues" evidence="3">
    <location>
        <begin position="28"/>
        <end position="40"/>
    </location>
</feature>
<feature type="modified residue" description="Pyrrolidone carboxylic acid" evidence="6">
    <location>
        <position position="52"/>
    </location>
</feature>
<feature type="modified residue" description="Cysteine amide" evidence="6">
    <location>
        <position position="71"/>
    </location>
</feature>
<feature type="disulfide bond" evidence="7">
    <location>
        <begin position="54"/>
        <end position="64"/>
    </location>
</feature>
<feature type="disulfide bond" evidence="7">
    <location>
        <begin position="55"/>
        <end position="70"/>
    </location>
</feature>
<feature type="disulfide bond" evidence="7">
    <location>
        <begin position="59"/>
        <end position="71"/>
    </location>
</feature>
<feature type="mutagenesis site" description="Increase of affinity for both Nav1.2/SCN2A and Nav1.4/SCN4A." evidence="6 10">
    <original>Q</original>
    <variation>R</variation>
    <location>
        <position position="52"/>
    </location>
</feature>
<feature type="mutagenesis site" description="Increase of affinity at Nav1.2/SCN2A and decrease of affinity at Nav1.4/SCN4A." evidence="6 10">
    <location>
        <position position="52"/>
    </location>
</feature>
<feature type="mutagenesis site" description="6-fold decrease of affinity to both Nav1.2/SCN2A and Nav1.4/SCN4A; when associated with DEL-52." evidence="6">
    <original>K</original>
    <variation>A</variation>
    <location>
        <position position="62"/>
    </location>
</feature>
<feature type="mutagenesis site" description="10-fold increase of affinity at Nav1.2/SCN2A without affecting Nav1.4/SCN4A affinity; when associated with DEL-52 and A-66." evidence="6">
    <original>K</original>
    <variation>R</variation>
    <location>
        <position position="62"/>
    </location>
</feature>
<feature type="mutagenesis site" description="22- and 87-fold decrease of affinity to Nav1.2/SCN2A and Nav1.4/SCN4A, respectively; when associated with DEL-52." evidence="6">
    <original>W</original>
    <variation>A</variation>
    <location>
        <position position="63"/>
    </location>
</feature>
<feature type="mutagenesis site" description="Decrease of affinity to both Nav1.2/SCN2A and Nav1.4/SCN4A; when associated with DEL-52." evidence="6">
    <original>R</original>
    <variation>A</variation>
    <location>
        <position position="65"/>
    </location>
</feature>
<feature type="mutagenesis site" description="10-fold increase of affinity at Nav1.2/SCN2A without affecting Nav1.4/SCN4A affinity; when associated with DEL-52. 30-fold decrease of affinity to Nav1.4/SCN4A without affecting Nav1.2/SCN2A affinity; when associated with DEL-52 and R-67. 100,000- and 400-fold decrease in affinity to Nav1.2/SCN2A and Nav1.4/SCN4A, respectively; when associated with DEL-52 and D-67. Different changes when associated with C-terminal extension, see mutated Cys-71." evidence="6 10">
    <original>D</original>
    <variation>A</variation>
    <location>
        <position position="66"/>
    </location>
</feature>
<feature type="mutagenesis site" description="Decrease of affinity to both Nav1.2/SCN2A and Nav1.4/SCN4A; when associated with DEL-52." evidence="6 10">
    <original>D</original>
    <variation>K</variation>
    <location>
        <position position="66"/>
    </location>
</feature>
<feature type="mutagenesis site" description="Most important decrease of affinity to both Nav1.2/SCN2A and Nav1.4/SCN4A; when associated with DEL-52." evidence="6">
    <original>H</original>
    <variation>A</variation>
    <location>
        <position position="67"/>
    </location>
</feature>
<feature type="mutagenesis site" description="100,000- and 400-fold decrease in affinity to Nav1.2/SCN2A and Nav1.4/SCN4A, respectively; when associated with DEL-52 and A-66." evidence="6">
    <original>H</original>
    <variation>D</variation>
    <location>
        <position position="67"/>
    </location>
</feature>
<feature type="mutagenesis site" description="30-fold decrease of affinity at Nav1.4/SCN4A without affecting Nav1.2/SCN2A affinity; when associated with DEL-52 and A-66." evidence="6">
    <original>H</original>
    <variation>R</variation>
    <location>
        <position position="67"/>
    </location>
</feature>
<feature type="mutagenesis site" description="30- and 500-fold decrease of affinity to Nav1.2/SCN2A and Nav1.4/SCN4A, respectively; when associated with DEL-52." evidence="6">
    <original>R</original>
    <variation>A</variation>
    <location>
        <position position="69"/>
    </location>
</feature>
<feature type="mutagenesis site" description="Increase in affinity for Nav1.2/SCN2A, no change in affinity for Nav1.4/SCN4A; when associated with DEL-52 and A-66." evidence="10">
    <original>C</original>
    <variation>CA</variation>
    <location>
        <position position="71"/>
    </location>
</feature>
<feature type="mutagenesis site" description="Increase in affinity for Nav1.2/SCN2A, little decrease in affinity for Nav1.4/SCN4A; when associated with DEL-52 and A-66." evidence="10">
    <original>C</original>
    <variation>CAA</variation>
    <location>
        <position position="71"/>
    </location>
</feature>
<feature type="mutagenesis site" description="Important decrease in affinity for both Nav1.2/SCN2A and Nav1.4/SCN4A; when associated with DEL-52 and A-66." evidence="10">
    <original>C</original>
    <variation>CAD</variation>
    <location>
        <position position="71"/>
    </location>
</feature>
<feature type="mutagenesis site" description="Little decrease in affinity for Nav1.4/SCN4A, no change in affinity for Nav1.2/SCN2A; when associated with DEL-52 and A-66." evidence="10">
    <original>C</original>
    <variation>CAK</variation>
    <location>
        <position position="71"/>
    </location>
</feature>
<feature type="mutagenesis site" description="The second most selective for Nav1.2/SCN2A over Nav1.4/SCVN4A; when associated with DEL-52 and A-66." evidence="10">
    <original>C</original>
    <variation>CD</variation>
    <location>
        <position position="71"/>
    </location>
</feature>
<feature type="mutagenesis site" description="The most selective for Nav1.2/SCN2A over Nav1.4/SCVN4A; when associated with DEL-52 and A-66." evidence="10">
    <original>C</original>
    <variation>CK</variation>
    <location>
        <position position="71"/>
    </location>
</feature>
<organism>
    <name type="scientific">Conus striatus</name>
    <name type="common">Striated cone</name>
    <dbReference type="NCBI Taxonomy" id="6493"/>
    <lineage>
        <taxon>Eukaryota</taxon>
        <taxon>Metazoa</taxon>
        <taxon>Spiralia</taxon>
        <taxon>Lophotrochozoa</taxon>
        <taxon>Mollusca</taxon>
        <taxon>Gastropoda</taxon>
        <taxon>Caenogastropoda</taxon>
        <taxon>Neogastropoda</taxon>
        <taxon>Conoidea</taxon>
        <taxon>Conidae</taxon>
        <taxon>Conus</taxon>
        <taxon>Pionoconus</taxon>
    </lineage>
</organism>
<dbReference type="EMBL" id="AY207469">
    <property type="protein sequence ID" value="AAO48588.1"/>
    <property type="molecule type" value="mRNA"/>
</dbReference>
<dbReference type="BMRB" id="Q86DU6"/>
<dbReference type="TCDB" id="8.B.28.1.1">
    <property type="family name" value="the mu-conotoxin (mu-conotoxin) family"/>
</dbReference>
<dbReference type="ConoServer" id="825">
    <property type="toxin name" value="SIIIA precursor"/>
</dbReference>
<dbReference type="GO" id="GO:0005576">
    <property type="term" value="C:extracellular region"/>
    <property type="evidence" value="ECO:0007669"/>
    <property type="project" value="UniProtKB-SubCell"/>
</dbReference>
<dbReference type="GO" id="GO:0019871">
    <property type="term" value="F:sodium channel inhibitor activity"/>
    <property type="evidence" value="ECO:0007669"/>
    <property type="project" value="InterPro"/>
</dbReference>
<dbReference type="GO" id="GO:0090729">
    <property type="term" value="F:toxin activity"/>
    <property type="evidence" value="ECO:0007669"/>
    <property type="project" value="UniProtKB-KW"/>
</dbReference>
<dbReference type="InterPro" id="IPR004214">
    <property type="entry name" value="Conotoxin"/>
</dbReference>
<dbReference type="InterPro" id="IPR008036">
    <property type="entry name" value="Conotoxin_mu-typ"/>
</dbReference>
<dbReference type="Pfam" id="PF02950">
    <property type="entry name" value="Conotoxin"/>
    <property type="match status" value="1"/>
</dbReference>
<dbReference type="PROSITE" id="PS60013">
    <property type="entry name" value="MU_CONOTOXIN"/>
    <property type="match status" value="1"/>
</dbReference>
<proteinExistence type="evidence at protein level"/>
<sequence length="73" mass="8105">MMSKLGVLLTVCPLLFPLTALPPDGDQPADRPAERMQDDISSDEHPLFDKRQNCCNGGCSSKWCRDHARCCGR</sequence>
<accession>Q86DU6</accession>
<comment type="function">
    <text evidence="4 5 6 7 8 9">Mu-conotoxins block voltage-gated sodium channels (Nav). This toxin moderately blocks rNav1.1/SCN1A, rNav1.2/SCN2A, rNav1.3/SCN3A, rNav1.4/SCN4A, and mNav1.6/SCN8A.</text>
</comment>
<comment type="subcellular location">
    <subcellularLocation>
        <location evidence="6">Secreted</location>
    </subcellularLocation>
</comment>
<comment type="tissue specificity">
    <text evidence="6">Expressed by the venom duct.</text>
</comment>
<comment type="domain">
    <text evidence="13">The cysteine framework is III (CC-C-C-CC). Classified in the M-5 branch, since 5 residues stand between the fourth and the fifth cysteine residues.</text>
</comment>
<comment type="mass spectrometry" mass="2206.8" method="Electrospray" evidence="6"/>
<comment type="miscellaneous">
    <text evidence="6">Negative results: does not inhibit Nav1.5/SCN5A, Nav1.7/SCN9A and Nav1.8/SCN10A.</text>
</comment>
<comment type="similarity">
    <text evidence="13">Belongs to the conotoxin M superfamily.</text>
</comment>
<comment type="caution">
    <text evidence="13">All results of mutagenesis experiments are compared with the mutant DEL-52.</text>
</comment>
<name>CM3A_CONST</name>